<keyword id="KW-0297">G-protein coupled receptor</keyword>
<keyword id="KW-0325">Glycoprotein</keyword>
<keyword id="KW-0472">Membrane</keyword>
<keyword id="KW-0675">Receptor</keyword>
<keyword id="KW-1185">Reference proteome</keyword>
<keyword id="KW-0716">Sensory transduction</keyword>
<keyword id="KW-0919">Taste</keyword>
<keyword id="KW-0807">Transducer</keyword>
<keyword id="KW-0812">Transmembrane</keyword>
<keyword id="KW-1133">Transmembrane helix</keyword>
<accession>Q67ES6</accession>
<proteinExistence type="inferred from homology"/>
<name>TR129_RAT</name>
<organism>
    <name type="scientific">Rattus norvegicus</name>
    <name type="common">Rat</name>
    <dbReference type="NCBI Taxonomy" id="10116"/>
    <lineage>
        <taxon>Eukaryota</taxon>
        <taxon>Metazoa</taxon>
        <taxon>Chordata</taxon>
        <taxon>Craniata</taxon>
        <taxon>Vertebrata</taxon>
        <taxon>Euteleostomi</taxon>
        <taxon>Mammalia</taxon>
        <taxon>Eutheria</taxon>
        <taxon>Euarchontoglires</taxon>
        <taxon>Glires</taxon>
        <taxon>Rodentia</taxon>
        <taxon>Myomorpha</taxon>
        <taxon>Muroidea</taxon>
        <taxon>Muridae</taxon>
        <taxon>Murinae</taxon>
        <taxon>Rattus</taxon>
    </lineage>
</organism>
<sequence>MDGIIQIISAFIVIIEIIIGWFGNGFIVLVNCMHWIKRRRISTVNQILTALAFSRIYLLLTVFTVILASVQYSNILVTRREVKVIIFHLITSNHFSMWLAACLGLFYFLKIANFSNFIFVFLKKRVNKVVSGTLLMSLVFLFLNTLLINSYIDAQIDDYRGYLLYDFTSNITVSFYRVILVINNCIFTSIPFALSQSTFLMLIFSLWRHYKKMQQHAQRCRDTLTNAHIKVLQTMIMYVLLSAIFFLFLSMQIWRNKLMENILFIRFCETVAAVFPSGHSCVLIWGDTNLRQTFLSVLWWLKHRFTLWVPKLYCR</sequence>
<dbReference type="EMBL" id="AY362744">
    <property type="protein sequence ID" value="AAR13353.1"/>
    <property type="molecule type" value="Genomic_DNA"/>
</dbReference>
<dbReference type="RefSeq" id="NP_001160155.1">
    <property type="nucleotide sequence ID" value="NM_001166683.1"/>
</dbReference>
<dbReference type="SMR" id="Q67ES6"/>
<dbReference type="FunCoup" id="Q67ES6">
    <property type="interactions" value="80"/>
</dbReference>
<dbReference type="STRING" id="10116.ENSRNOP00000048668"/>
<dbReference type="GlyCosmos" id="Q67ES6">
    <property type="glycosylation" value="1 site, No reported glycans"/>
</dbReference>
<dbReference type="GlyGen" id="Q67ES6">
    <property type="glycosylation" value="1 site"/>
</dbReference>
<dbReference type="PaxDb" id="10116-ENSRNOP00000048668"/>
<dbReference type="Ensembl" id="ENSRNOT00000051110.3">
    <property type="protein sequence ID" value="ENSRNOP00000048668.1"/>
    <property type="gene ID" value="ENSRNOG00000031107.3"/>
</dbReference>
<dbReference type="GeneID" id="100310881"/>
<dbReference type="KEGG" id="rno:100310881"/>
<dbReference type="UCSC" id="RGD:2314257">
    <property type="organism name" value="rat"/>
</dbReference>
<dbReference type="AGR" id="RGD:2314257"/>
<dbReference type="CTD" id="387354"/>
<dbReference type="RGD" id="2314257">
    <property type="gene designation" value="Tas2r129"/>
</dbReference>
<dbReference type="GeneTree" id="ENSGT01100000263477"/>
<dbReference type="HOGENOM" id="CLU_072337_3_0_1"/>
<dbReference type="InParanoid" id="Q67ES6"/>
<dbReference type="OMA" id="MWLAACL"/>
<dbReference type="OrthoDB" id="8876749at2759"/>
<dbReference type="PhylomeDB" id="Q67ES6"/>
<dbReference type="TreeFam" id="TF335891"/>
<dbReference type="PRO" id="PR:Q67ES6"/>
<dbReference type="Proteomes" id="UP000002494">
    <property type="component" value="Chromosome 4"/>
</dbReference>
<dbReference type="GO" id="GO:0016020">
    <property type="term" value="C:membrane"/>
    <property type="evidence" value="ECO:0000318"/>
    <property type="project" value="GO_Central"/>
</dbReference>
<dbReference type="GO" id="GO:0033038">
    <property type="term" value="F:bitter taste receptor activity"/>
    <property type="evidence" value="ECO:0000318"/>
    <property type="project" value="GO_Central"/>
</dbReference>
<dbReference type="GO" id="GO:0004930">
    <property type="term" value="F:G protein-coupled receptor activity"/>
    <property type="evidence" value="ECO:0007669"/>
    <property type="project" value="UniProtKB-KW"/>
</dbReference>
<dbReference type="GO" id="GO:0001580">
    <property type="term" value="P:detection of chemical stimulus involved in sensory perception of bitter taste"/>
    <property type="evidence" value="ECO:0000318"/>
    <property type="project" value="GO_Central"/>
</dbReference>
<dbReference type="CDD" id="cd15019">
    <property type="entry name" value="7tm_TAS2R14-like"/>
    <property type="match status" value="1"/>
</dbReference>
<dbReference type="FunFam" id="1.20.1070.10:FF:000042">
    <property type="entry name" value="Taste receptor type 2 member 7"/>
    <property type="match status" value="1"/>
</dbReference>
<dbReference type="Gene3D" id="1.20.1070.10">
    <property type="entry name" value="Rhodopsin 7-helix transmembrane proteins"/>
    <property type="match status" value="1"/>
</dbReference>
<dbReference type="InterPro" id="IPR007960">
    <property type="entry name" value="TAS2R"/>
</dbReference>
<dbReference type="PANTHER" id="PTHR11394">
    <property type="entry name" value="TASTE RECEPTOR TYPE 2"/>
    <property type="match status" value="1"/>
</dbReference>
<dbReference type="PANTHER" id="PTHR11394:SF34">
    <property type="entry name" value="TASTE RECEPTOR TYPE 2 MEMBER 129"/>
    <property type="match status" value="1"/>
</dbReference>
<dbReference type="Pfam" id="PF05296">
    <property type="entry name" value="TAS2R"/>
    <property type="match status" value="1"/>
</dbReference>
<dbReference type="SUPFAM" id="SSF81321">
    <property type="entry name" value="Family A G protein-coupled receptor-like"/>
    <property type="match status" value="1"/>
</dbReference>
<evidence type="ECO:0000250" key="1">
    <source>
        <dbReference type="UniProtKB" id="Q7M709"/>
    </source>
</evidence>
<evidence type="ECO:0000255" key="2"/>
<evidence type="ECO:0000305" key="3"/>
<evidence type="ECO:0000312" key="4">
    <source>
        <dbReference type="EMBL" id="AAR13353.1"/>
    </source>
</evidence>
<reference evidence="4" key="1">
    <citation type="submission" date="2003-08" db="EMBL/GenBank/DDBJ databases">
        <title>Identification of new putative rat taste receptors belonging to the T2R family.</title>
        <authorList>
            <person name="Conte C."/>
            <person name="Ebeling M."/>
            <person name="Marcuz A."/>
            <person name="Andres-Barquin P.J."/>
        </authorList>
    </citation>
    <scope>NUCLEOTIDE SEQUENCE [GENOMIC DNA]</scope>
    <source>
        <strain evidence="4">Sprague-Dawley</strain>
    </source>
</reference>
<protein>
    <recommendedName>
        <fullName>Taste receptor type 2 member 129</fullName>
        <shortName>T2R129</shortName>
    </recommendedName>
    <alternativeName>
        <fullName>Taste receptor type 2 member 24</fullName>
        <shortName>T2R24</shortName>
    </alternativeName>
</protein>
<gene>
    <name evidence="1" type="primary">Tas2r129</name>
    <name type="synonym">T2r24</name>
</gene>
<feature type="chain" id="PRO_0000248486" description="Taste receptor type 2 member 129">
    <location>
        <begin position="1"/>
        <end position="315"/>
    </location>
</feature>
<feature type="topological domain" description="Extracellular" evidence="2">
    <location>
        <begin position="1"/>
        <end position="9"/>
    </location>
</feature>
<feature type="transmembrane region" description="Helical; Name=1" evidence="2">
    <location>
        <begin position="10"/>
        <end position="30"/>
    </location>
</feature>
<feature type="topological domain" description="Cytoplasmic" evidence="2">
    <location>
        <begin position="31"/>
        <end position="46"/>
    </location>
</feature>
<feature type="transmembrane region" description="Helical; Name=2" evidence="2">
    <location>
        <begin position="47"/>
        <end position="67"/>
    </location>
</feature>
<feature type="topological domain" description="Extracellular" evidence="2">
    <location>
        <begin position="68"/>
        <end position="101"/>
    </location>
</feature>
<feature type="transmembrane region" description="Helical; Name=3" evidence="2">
    <location>
        <begin position="102"/>
        <end position="122"/>
    </location>
</feature>
<feature type="topological domain" description="Cytoplasmic" evidence="2">
    <location>
        <begin position="123"/>
        <end position="128"/>
    </location>
</feature>
<feature type="transmembrane region" description="Helical; Name=4" evidence="2">
    <location>
        <begin position="129"/>
        <end position="149"/>
    </location>
</feature>
<feature type="topological domain" description="Extracellular" evidence="2">
    <location>
        <begin position="150"/>
        <end position="185"/>
    </location>
</feature>
<feature type="transmembrane region" description="Helical; Name=5" evidence="2">
    <location>
        <begin position="186"/>
        <end position="206"/>
    </location>
</feature>
<feature type="topological domain" description="Cytoplasmic" evidence="2">
    <location>
        <begin position="207"/>
        <end position="233"/>
    </location>
</feature>
<feature type="transmembrane region" description="Helical; Name=6" evidence="2">
    <location>
        <begin position="234"/>
        <end position="254"/>
    </location>
</feature>
<feature type="topological domain" description="Extracellular" evidence="2">
    <location>
        <begin position="255"/>
        <end position="266"/>
    </location>
</feature>
<feature type="transmembrane region" description="Helical; Name=7" evidence="2">
    <location>
        <begin position="267"/>
        <end position="287"/>
    </location>
</feature>
<feature type="topological domain" description="Cytoplasmic" evidence="2">
    <location>
        <begin position="288"/>
        <end position="315"/>
    </location>
</feature>
<feature type="glycosylation site" description="N-linked (GlcNAc...) asparagine" evidence="2">
    <location>
        <position position="170"/>
    </location>
</feature>
<comment type="function">
    <text evidence="3">Putative taste receptor which may play a role in the perception of bitterness.</text>
</comment>
<comment type="subcellular location">
    <subcellularLocation>
        <location evidence="3">Membrane</location>
        <topology evidence="3">Multi-pass membrane protein</topology>
    </subcellularLocation>
</comment>
<comment type="miscellaneous">
    <text evidence="3">Several bitter taste receptors are expressed in a single taste receptor cell.</text>
</comment>
<comment type="similarity">
    <text evidence="2">Belongs to the G-protein coupled receptor T2R family.</text>
</comment>